<accession>A1WBK4</accession>
<name>COAD_ACISJ</name>
<comment type="function">
    <text evidence="1">Reversibly transfers an adenylyl group from ATP to 4'-phosphopantetheine, yielding dephospho-CoA (dPCoA) and pyrophosphate.</text>
</comment>
<comment type="catalytic activity">
    <reaction evidence="1">
        <text>(R)-4'-phosphopantetheine + ATP + H(+) = 3'-dephospho-CoA + diphosphate</text>
        <dbReference type="Rhea" id="RHEA:19801"/>
        <dbReference type="ChEBI" id="CHEBI:15378"/>
        <dbReference type="ChEBI" id="CHEBI:30616"/>
        <dbReference type="ChEBI" id="CHEBI:33019"/>
        <dbReference type="ChEBI" id="CHEBI:57328"/>
        <dbReference type="ChEBI" id="CHEBI:61723"/>
        <dbReference type="EC" id="2.7.7.3"/>
    </reaction>
</comment>
<comment type="cofactor">
    <cofactor evidence="1">
        <name>Mg(2+)</name>
        <dbReference type="ChEBI" id="CHEBI:18420"/>
    </cofactor>
</comment>
<comment type="pathway">
    <text evidence="1">Cofactor biosynthesis; coenzyme A biosynthesis; CoA from (R)-pantothenate: step 4/5.</text>
</comment>
<comment type="subunit">
    <text evidence="1">Homohexamer.</text>
</comment>
<comment type="subcellular location">
    <subcellularLocation>
        <location evidence="1">Cytoplasm</location>
    </subcellularLocation>
</comment>
<comment type="similarity">
    <text evidence="1">Belongs to the bacterial CoaD family.</text>
</comment>
<feature type="chain" id="PRO_1000096754" description="Phosphopantetheine adenylyltransferase">
    <location>
        <begin position="1"/>
        <end position="165"/>
    </location>
</feature>
<feature type="binding site" evidence="1">
    <location>
        <begin position="11"/>
        <end position="12"/>
    </location>
    <ligand>
        <name>ATP</name>
        <dbReference type="ChEBI" id="CHEBI:30616"/>
    </ligand>
</feature>
<feature type="binding site" evidence="1">
    <location>
        <position position="11"/>
    </location>
    <ligand>
        <name>substrate</name>
    </ligand>
</feature>
<feature type="binding site" evidence="1">
    <location>
        <position position="19"/>
    </location>
    <ligand>
        <name>ATP</name>
        <dbReference type="ChEBI" id="CHEBI:30616"/>
    </ligand>
</feature>
<feature type="binding site" evidence="1">
    <location>
        <position position="43"/>
    </location>
    <ligand>
        <name>substrate</name>
    </ligand>
</feature>
<feature type="binding site" evidence="1">
    <location>
        <position position="75"/>
    </location>
    <ligand>
        <name>substrate</name>
    </ligand>
</feature>
<feature type="binding site" evidence="1">
    <location>
        <position position="89"/>
    </location>
    <ligand>
        <name>substrate</name>
    </ligand>
</feature>
<feature type="binding site" evidence="1">
    <location>
        <begin position="90"/>
        <end position="92"/>
    </location>
    <ligand>
        <name>ATP</name>
        <dbReference type="ChEBI" id="CHEBI:30616"/>
    </ligand>
</feature>
<feature type="binding site" evidence="1">
    <location>
        <position position="100"/>
    </location>
    <ligand>
        <name>ATP</name>
        <dbReference type="ChEBI" id="CHEBI:30616"/>
    </ligand>
</feature>
<feature type="binding site" evidence="1">
    <location>
        <begin position="125"/>
        <end position="131"/>
    </location>
    <ligand>
        <name>ATP</name>
        <dbReference type="ChEBI" id="CHEBI:30616"/>
    </ligand>
</feature>
<feature type="site" description="Transition state stabilizer" evidence="1">
    <location>
        <position position="19"/>
    </location>
</feature>
<sequence>MAHVLAVYPGTFDPITLGHEDLVRRAARLFDRVIVAVAIAHHKKTLFSLDERMEMARQALADCPQVQVESFEGLVTEFTAARGGTAMVRGLRSGTDFDYEFQLAGMNRALVPGVETVFLTPASQYQFISSTLVREIGTLGGDVAQFVSPGVHERLLHKLGRTAAA</sequence>
<gene>
    <name evidence="1" type="primary">coaD</name>
    <name type="ordered locus">Ajs_3516</name>
</gene>
<reference key="1">
    <citation type="submission" date="2006-12" db="EMBL/GenBank/DDBJ databases">
        <title>Complete sequence of chromosome 1 of Acidovorax sp. JS42.</title>
        <authorList>
            <person name="Copeland A."/>
            <person name="Lucas S."/>
            <person name="Lapidus A."/>
            <person name="Barry K."/>
            <person name="Detter J.C."/>
            <person name="Glavina del Rio T."/>
            <person name="Dalin E."/>
            <person name="Tice H."/>
            <person name="Pitluck S."/>
            <person name="Chertkov O."/>
            <person name="Brettin T."/>
            <person name="Bruce D."/>
            <person name="Han C."/>
            <person name="Tapia R."/>
            <person name="Gilna P."/>
            <person name="Schmutz J."/>
            <person name="Larimer F."/>
            <person name="Land M."/>
            <person name="Hauser L."/>
            <person name="Kyrpides N."/>
            <person name="Kim E."/>
            <person name="Stahl D."/>
            <person name="Richardson P."/>
        </authorList>
    </citation>
    <scope>NUCLEOTIDE SEQUENCE [LARGE SCALE GENOMIC DNA]</scope>
    <source>
        <strain>JS42</strain>
    </source>
</reference>
<organism>
    <name type="scientific">Acidovorax sp. (strain JS42)</name>
    <dbReference type="NCBI Taxonomy" id="232721"/>
    <lineage>
        <taxon>Bacteria</taxon>
        <taxon>Pseudomonadati</taxon>
        <taxon>Pseudomonadota</taxon>
        <taxon>Betaproteobacteria</taxon>
        <taxon>Burkholderiales</taxon>
        <taxon>Comamonadaceae</taxon>
        <taxon>Acidovorax</taxon>
    </lineage>
</organism>
<evidence type="ECO:0000255" key="1">
    <source>
        <dbReference type="HAMAP-Rule" id="MF_00151"/>
    </source>
</evidence>
<keyword id="KW-0067">ATP-binding</keyword>
<keyword id="KW-0173">Coenzyme A biosynthesis</keyword>
<keyword id="KW-0963">Cytoplasm</keyword>
<keyword id="KW-0460">Magnesium</keyword>
<keyword id="KW-0547">Nucleotide-binding</keyword>
<keyword id="KW-0548">Nucleotidyltransferase</keyword>
<keyword id="KW-0808">Transferase</keyword>
<protein>
    <recommendedName>
        <fullName evidence="1">Phosphopantetheine adenylyltransferase</fullName>
        <ecNumber evidence="1">2.7.7.3</ecNumber>
    </recommendedName>
    <alternativeName>
        <fullName evidence="1">Dephospho-CoA pyrophosphorylase</fullName>
    </alternativeName>
    <alternativeName>
        <fullName evidence="1">Pantetheine-phosphate adenylyltransferase</fullName>
        <shortName evidence="1">PPAT</shortName>
    </alternativeName>
</protein>
<dbReference type="EC" id="2.7.7.3" evidence="1"/>
<dbReference type="EMBL" id="CP000539">
    <property type="protein sequence ID" value="ABM43629.1"/>
    <property type="molecule type" value="Genomic_DNA"/>
</dbReference>
<dbReference type="SMR" id="A1WBK4"/>
<dbReference type="STRING" id="232721.Ajs_3516"/>
<dbReference type="KEGG" id="ajs:Ajs_3516"/>
<dbReference type="eggNOG" id="COG0669">
    <property type="taxonomic scope" value="Bacteria"/>
</dbReference>
<dbReference type="HOGENOM" id="CLU_100149_0_1_4"/>
<dbReference type="UniPathway" id="UPA00241">
    <property type="reaction ID" value="UER00355"/>
</dbReference>
<dbReference type="Proteomes" id="UP000000645">
    <property type="component" value="Chromosome"/>
</dbReference>
<dbReference type="GO" id="GO:0005737">
    <property type="term" value="C:cytoplasm"/>
    <property type="evidence" value="ECO:0007669"/>
    <property type="project" value="UniProtKB-SubCell"/>
</dbReference>
<dbReference type="GO" id="GO:0005524">
    <property type="term" value="F:ATP binding"/>
    <property type="evidence" value="ECO:0007669"/>
    <property type="project" value="UniProtKB-KW"/>
</dbReference>
<dbReference type="GO" id="GO:0004595">
    <property type="term" value="F:pantetheine-phosphate adenylyltransferase activity"/>
    <property type="evidence" value="ECO:0007669"/>
    <property type="project" value="UniProtKB-UniRule"/>
</dbReference>
<dbReference type="GO" id="GO:0015937">
    <property type="term" value="P:coenzyme A biosynthetic process"/>
    <property type="evidence" value="ECO:0007669"/>
    <property type="project" value="UniProtKB-UniRule"/>
</dbReference>
<dbReference type="CDD" id="cd02163">
    <property type="entry name" value="PPAT"/>
    <property type="match status" value="1"/>
</dbReference>
<dbReference type="Gene3D" id="3.40.50.620">
    <property type="entry name" value="HUPs"/>
    <property type="match status" value="1"/>
</dbReference>
<dbReference type="HAMAP" id="MF_00151">
    <property type="entry name" value="PPAT_bact"/>
    <property type="match status" value="1"/>
</dbReference>
<dbReference type="InterPro" id="IPR004821">
    <property type="entry name" value="Cyt_trans-like"/>
</dbReference>
<dbReference type="InterPro" id="IPR001980">
    <property type="entry name" value="PPAT"/>
</dbReference>
<dbReference type="InterPro" id="IPR014729">
    <property type="entry name" value="Rossmann-like_a/b/a_fold"/>
</dbReference>
<dbReference type="NCBIfam" id="TIGR01510">
    <property type="entry name" value="coaD_prev_kdtB"/>
    <property type="match status" value="1"/>
</dbReference>
<dbReference type="NCBIfam" id="TIGR00125">
    <property type="entry name" value="cyt_tran_rel"/>
    <property type="match status" value="1"/>
</dbReference>
<dbReference type="PANTHER" id="PTHR21342">
    <property type="entry name" value="PHOSPHOPANTETHEINE ADENYLYLTRANSFERASE"/>
    <property type="match status" value="1"/>
</dbReference>
<dbReference type="PANTHER" id="PTHR21342:SF1">
    <property type="entry name" value="PHOSPHOPANTETHEINE ADENYLYLTRANSFERASE"/>
    <property type="match status" value="1"/>
</dbReference>
<dbReference type="Pfam" id="PF01467">
    <property type="entry name" value="CTP_transf_like"/>
    <property type="match status" value="1"/>
</dbReference>
<dbReference type="PRINTS" id="PR01020">
    <property type="entry name" value="LPSBIOSNTHSS"/>
</dbReference>
<dbReference type="SUPFAM" id="SSF52374">
    <property type="entry name" value="Nucleotidylyl transferase"/>
    <property type="match status" value="1"/>
</dbReference>
<proteinExistence type="inferred from homology"/>